<dbReference type="EMBL" id="ACFL01000067">
    <property type="protein sequence ID" value="EEU07887.1"/>
    <property type="molecule type" value="Genomic_DNA"/>
</dbReference>
<dbReference type="SMR" id="C7GMR4"/>
<dbReference type="Proteomes" id="UP000008073">
    <property type="component" value="Unassembled WGS sequence"/>
</dbReference>
<dbReference type="GO" id="GO:0005634">
    <property type="term" value="C:nucleus"/>
    <property type="evidence" value="ECO:0007669"/>
    <property type="project" value="UniProtKB-SubCell"/>
</dbReference>
<dbReference type="GO" id="GO:0000981">
    <property type="term" value="F:DNA-binding transcription factor activity, RNA polymerase II-specific"/>
    <property type="evidence" value="ECO:0007669"/>
    <property type="project" value="InterPro"/>
</dbReference>
<dbReference type="GO" id="GO:0000977">
    <property type="term" value="F:RNA polymerase II transcription regulatory region sequence-specific DNA binding"/>
    <property type="evidence" value="ECO:0007669"/>
    <property type="project" value="TreeGrafter"/>
</dbReference>
<dbReference type="GO" id="GO:0008270">
    <property type="term" value="F:zinc ion binding"/>
    <property type="evidence" value="ECO:0007669"/>
    <property type="project" value="InterPro"/>
</dbReference>
<dbReference type="GO" id="GO:0009267">
    <property type="term" value="P:cellular response to starvation"/>
    <property type="evidence" value="ECO:0007669"/>
    <property type="project" value="TreeGrafter"/>
</dbReference>
<dbReference type="GO" id="GO:0006094">
    <property type="term" value="P:gluconeogenesis"/>
    <property type="evidence" value="ECO:0007669"/>
    <property type="project" value="UniProtKB-KW"/>
</dbReference>
<dbReference type="CDD" id="cd00067">
    <property type="entry name" value="GAL4"/>
    <property type="match status" value="1"/>
</dbReference>
<dbReference type="CDD" id="cd00130">
    <property type="entry name" value="PAS"/>
    <property type="match status" value="1"/>
</dbReference>
<dbReference type="Gene3D" id="3.30.450.20">
    <property type="entry name" value="PAS domain"/>
    <property type="match status" value="1"/>
</dbReference>
<dbReference type="InterPro" id="IPR050335">
    <property type="entry name" value="ERT1_acuK_gluconeogen_tf"/>
</dbReference>
<dbReference type="InterPro" id="IPR000014">
    <property type="entry name" value="PAS"/>
</dbReference>
<dbReference type="InterPro" id="IPR035965">
    <property type="entry name" value="PAS-like_dom_sf"/>
</dbReference>
<dbReference type="InterPro" id="IPR056751">
    <property type="entry name" value="PAS_13"/>
</dbReference>
<dbReference type="InterPro" id="IPR036864">
    <property type="entry name" value="Zn2-C6_fun-type_DNA-bd_sf"/>
</dbReference>
<dbReference type="InterPro" id="IPR001138">
    <property type="entry name" value="Zn2Cys6_DnaBD"/>
</dbReference>
<dbReference type="NCBIfam" id="TIGR00229">
    <property type="entry name" value="sensory_box"/>
    <property type="match status" value="1"/>
</dbReference>
<dbReference type="PANTHER" id="PTHR47659:SF1">
    <property type="entry name" value="TRANSCRIPTION ACTIVATOR OF GLUCONEOGENESIS ERT1"/>
    <property type="match status" value="1"/>
</dbReference>
<dbReference type="PANTHER" id="PTHR47659">
    <property type="entry name" value="ZN(II)2CYS6 TRANSCRIPTION FACTOR (EUROFUNG)-RELATED"/>
    <property type="match status" value="1"/>
</dbReference>
<dbReference type="Pfam" id="PF24990">
    <property type="entry name" value="PAS_13"/>
    <property type="match status" value="1"/>
</dbReference>
<dbReference type="Pfam" id="PF00172">
    <property type="entry name" value="Zn_clus"/>
    <property type="match status" value="1"/>
</dbReference>
<dbReference type="SMART" id="SM00066">
    <property type="entry name" value="GAL4"/>
    <property type="match status" value="1"/>
</dbReference>
<dbReference type="SMART" id="SM00091">
    <property type="entry name" value="PAS"/>
    <property type="match status" value="1"/>
</dbReference>
<dbReference type="SUPFAM" id="SSF55785">
    <property type="entry name" value="PYP-like sensor domain (PAS domain)"/>
    <property type="match status" value="1"/>
</dbReference>
<dbReference type="SUPFAM" id="SSF57701">
    <property type="entry name" value="Zn2/Cys6 DNA-binding domain"/>
    <property type="match status" value="1"/>
</dbReference>
<dbReference type="PROSITE" id="PS50112">
    <property type="entry name" value="PAS"/>
    <property type="match status" value="1"/>
</dbReference>
<dbReference type="PROSITE" id="PS00463">
    <property type="entry name" value="ZN2_CY6_FUNGAL_1"/>
    <property type="match status" value="1"/>
</dbReference>
<dbReference type="PROSITE" id="PS50048">
    <property type="entry name" value="ZN2_CY6_FUNGAL_2"/>
    <property type="match status" value="1"/>
</dbReference>
<proteinExistence type="inferred from homology"/>
<protein>
    <recommendedName>
        <fullName>Transcription activator of gluconeogenesis</fullName>
    </recommendedName>
    <alternativeName>
        <fullName>Ethanol regulator of translation 1</fullName>
    </alternativeName>
</protein>
<name>ERT1_YEAS2</name>
<keyword id="KW-0010">Activator</keyword>
<keyword id="KW-0238">DNA-binding</keyword>
<keyword id="KW-0312">Gluconeogenesis</keyword>
<keyword id="KW-0479">Metal-binding</keyword>
<keyword id="KW-0539">Nucleus</keyword>
<keyword id="KW-0804">Transcription</keyword>
<keyword id="KW-0805">Transcription regulation</keyword>
<keyword id="KW-0862">Zinc</keyword>
<feature type="chain" id="PRO_0000406474" description="Transcription activator of gluconeogenesis">
    <location>
        <begin position="1"/>
        <end position="529"/>
    </location>
</feature>
<feature type="domain" description="PAS" evidence="2">
    <location>
        <begin position="408"/>
        <end position="480"/>
    </location>
</feature>
<feature type="DNA-binding region" description="Zn(2)-C6 fungal-type" evidence="3">
    <location>
        <begin position="40"/>
        <end position="68"/>
    </location>
</feature>
<feature type="region of interest" description="Disordered" evidence="4">
    <location>
        <begin position="1"/>
        <end position="31"/>
    </location>
</feature>
<feature type="region of interest" description="Disordered" evidence="4">
    <location>
        <begin position="174"/>
        <end position="198"/>
    </location>
</feature>
<feature type="compositionally biased region" description="Polar residues" evidence="4">
    <location>
        <begin position="14"/>
        <end position="23"/>
    </location>
</feature>
<feature type="compositionally biased region" description="Low complexity" evidence="4">
    <location>
        <begin position="174"/>
        <end position="193"/>
    </location>
</feature>
<evidence type="ECO:0000250" key="1"/>
<evidence type="ECO:0000255" key="2">
    <source>
        <dbReference type="PROSITE-ProRule" id="PRU00140"/>
    </source>
</evidence>
<evidence type="ECO:0000255" key="3">
    <source>
        <dbReference type="PROSITE-ProRule" id="PRU00227"/>
    </source>
</evidence>
<evidence type="ECO:0000256" key="4">
    <source>
        <dbReference type="SAM" id="MobiDB-lite"/>
    </source>
</evidence>
<evidence type="ECO:0000305" key="5"/>
<organism>
    <name type="scientific">Saccharomyces cerevisiae (strain JAY291)</name>
    <name type="common">Baker's yeast</name>
    <dbReference type="NCBI Taxonomy" id="574961"/>
    <lineage>
        <taxon>Eukaryota</taxon>
        <taxon>Fungi</taxon>
        <taxon>Dikarya</taxon>
        <taxon>Ascomycota</taxon>
        <taxon>Saccharomycotina</taxon>
        <taxon>Saccharomycetes</taxon>
        <taxon>Saccharomycetales</taxon>
        <taxon>Saccharomycetaceae</taxon>
        <taxon>Saccharomyces</taxon>
    </lineage>
</organism>
<comment type="function">
    <text evidence="1">Transcription factor which regulates nonfermentable carbon utilization. Activator of gluconeogenetic genes (By similarity).</text>
</comment>
<comment type="subcellular location">
    <subcellularLocation>
        <location evidence="3">Nucleus</location>
    </subcellularLocation>
</comment>
<comment type="similarity">
    <text evidence="5">Belongs to the ERT1/acuK family.</text>
</comment>
<accession>C7GMR4</accession>
<reference key="1">
    <citation type="journal article" date="2009" name="Genome Res.">
        <title>Genome structure of a Saccharomyces cerevisiae strain widely used in bioethanol production.</title>
        <authorList>
            <person name="Argueso J.L."/>
            <person name="Carazzolle M.F."/>
            <person name="Mieczkowski P.A."/>
            <person name="Duarte F.M."/>
            <person name="Netto O.V.C."/>
            <person name="Missawa S.K."/>
            <person name="Galzerani F."/>
            <person name="Costa G.G.L."/>
            <person name="Vidal R.O."/>
            <person name="Noronha M.F."/>
            <person name="Dominska M."/>
            <person name="Andrietta M.G.S."/>
            <person name="Andrietta S.R."/>
            <person name="Cunha A.F."/>
            <person name="Gomes L.H."/>
            <person name="Tavares F.C.A."/>
            <person name="Alcarde A.R."/>
            <person name="Dietrich F.S."/>
            <person name="McCusker J.H."/>
            <person name="Petes T.D."/>
            <person name="Pereira G.A.G."/>
        </authorList>
    </citation>
    <scope>NUCLEOTIDE SEQUENCE [LARGE SCALE GENOMIC DNA]</scope>
    <source>
        <strain>JAY291</strain>
    </source>
</reference>
<sequence>MCTPDENDYKTSTDPDTSANTNHTLEKKKRKKRKNTNVACVNCSRLHVSCEAKRPCLRCISKGLTATCVDAPRKKSKYLAGIPNRELPMSIQPDLPPRKIMIPIYNNSSNSSLNVNNMGEQQKFTSPQHIVHKAKFLSNAADSEYSILSNIIYQDTLSNKIPIDILYSNTNSTSNSTIGNSSNNSPTGTNTSPEETEMEKIRQLYSEQRANMPPHPYPSSNQNVYSILLGPNSAKIVASQVNLFANHFPLVPVDSADNSLNFKRLLPRDPSEKSSQINWDSSINQYYLNSETVTFPELAIPLKRRKNHLVSVSLESCSPDAANIKSNVGWEHSLRYSTPMEIYTSINAPFSHTPGFHHLLVYLKHRFNQQDLVKMCRSIAEFRPIFIACSVTLTEEDMIFMEQCYQRTLLEYVKFIAQIGTPTCIWRRNGQISYVNEEFEILCGWTREELLNKMTFIVEIMDDESVRDYFKTLSKVAYRDFRGSEKMKVCRLLSPIKGKIIHCCCMWTLKRDVSGLPLMILGNFMPILN</sequence>
<gene>
    <name type="primary">ERT1</name>
    <name type="ORF">C1Q_01609</name>
</gene>